<accession>P11646</accession>
<protein>
    <recommendedName>
        <fullName evidence="1">NAD(P)H-quinone oxidoreductase subunit 4L, chloroplastic</fullName>
        <ecNumber evidence="1">7.1.1.-</ecNumber>
    </recommendedName>
    <alternativeName>
        <fullName evidence="1">NAD(P)H dehydrogenase subunit 4L</fullName>
    </alternativeName>
    <alternativeName>
        <fullName evidence="1">NADH-plastoquinone oxidoreductase subunit 4L</fullName>
    </alternativeName>
</protein>
<feature type="chain" id="PRO_0000118508" description="NAD(P)H-quinone oxidoreductase subunit 4L, chloroplastic">
    <location>
        <begin position="1"/>
        <end position="101"/>
    </location>
</feature>
<feature type="transmembrane region" description="Helical" evidence="1">
    <location>
        <begin position="2"/>
        <end position="22"/>
    </location>
</feature>
<feature type="transmembrane region" description="Helical" evidence="1">
    <location>
        <begin position="32"/>
        <end position="52"/>
    </location>
</feature>
<feature type="transmembrane region" description="Helical" evidence="1">
    <location>
        <begin position="61"/>
        <end position="81"/>
    </location>
</feature>
<proteinExistence type="inferred from homology"/>
<name>NU4LC_MAIZE</name>
<evidence type="ECO:0000255" key="1">
    <source>
        <dbReference type="HAMAP-Rule" id="MF_01456"/>
    </source>
</evidence>
<dbReference type="EC" id="7.1.1.-" evidence="1"/>
<dbReference type="EMBL" id="X13159">
    <property type="protein sequence ID" value="CAA31556.1"/>
    <property type="molecule type" value="Genomic_DNA"/>
</dbReference>
<dbReference type="EMBL" id="X86563">
    <property type="protein sequence ID" value="CAA60350.1"/>
    <property type="molecule type" value="Genomic_DNA"/>
</dbReference>
<dbReference type="PIR" id="JU0010">
    <property type="entry name" value="QXZM4L"/>
</dbReference>
<dbReference type="RefSeq" id="NP_043089.1">
    <property type="nucleotide sequence ID" value="NC_001666.2"/>
</dbReference>
<dbReference type="SMR" id="P11646"/>
<dbReference type="FunCoup" id="P11646">
    <property type="interactions" value="48"/>
</dbReference>
<dbReference type="STRING" id="4577.P11646"/>
<dbReference type="PaxDb" id="4577-GRMZM5G835775_P01"/>
<dbReference type="GeneID" id="845184"/>
<dbReference type="KEGG" id="zma:845184"/>
<dbReference type="MaizeGDB" id="69254"/>
<dbReference type="eggNOG" id="KOG4669">
    <property type="taxonomic scope" value="Eukaryota"/>
</dbReference>
<dbReference type="HOGENOM" id="CLU_144724_1_1_1"/>
<dbReference type="InParanoid" id="P11646"/>
<dbReference type="OMA" id="FDVWLSR"/>
<dbReference type="OrthoDB" id="688188at2759"/>
<dbReference type="Proteomes" id="UP000007305">
    <property type="component" value="Chloroplast"/>
</dbReference>
<dbReference type="GO" id="GO:0009535">
    <property type="term" value="C:chloroplast thylakoid membrane"/>
    <property type="evidence" value="ECO:0007669"/>
    <property type="project" value="UniProtKB-SubCell"/>
</dbReference>
<dbReference type="GO" id="GO:0030964">
    <property type="term" value="C:NADH dehydrogenase complex"/>
    <property type="evidence" value="ECO:0000318"/>
    <property type="project" value="GO_Central"/>
</dbReference>
<dbReference type="GO" id="GO:0016655">
    <property type="term" value="F:oxidoreductase activity, acting on NAD(P)H, quinone or similar compound as acceptor"/>
    <property type="evidence" value="ECO:0007669"/>
    <property type="project" value="UniProtKB-UniRule"/>
</dbReference>
<dbReference type="GO" id="GO:0048038">
    <property type="term" value="F:quinone binding"/>
    <property type="evidence" value="ECO:0007669"/>
    <property type="project" value="UniProtKB-KW"/>
</dbReference>
<dbReference type="GO" id="GO:0042773">
    <property type="term" value="P:ATP synthesis coupled electron transport"/>
    <property type="evidence" value="ECO:0007669"/>
    <property type="project" value="InterPro"/>
</dbReference>
<dbReference type="GO" id="GO:0019684">
    <property type="term" value="P:photosynthesis, light reaction"/>
    <property type="evidence" value="ECO:0007669"/>
    <property type="project" value="UniProtKB-UniRule"/>
</dbReference>
<dbReference type="FunFam" id="1.10.287.3510:FF:000001">
    <property type="entry name" value="NADH-quinone oxidoreductase subunit K"/>
    <property type="match status" value="1"/>
</dbReference>
<dbReference type="Gene3D" id="1.10.287.3510">
    <property type="match status" value="1"/>
</dbReference>
<dbReference type="HAMAP" id="MF_01456">
    <property type="entry name" value="NDH1_NuoK"/>
    <property type="match status" value="1"/>
</dbReference>
<dbReference type="InterPro" id="IPR001133">
    <property type="entry name" value="NADH_UbQ_OxRdtase_chain4L/K"/>
</dbReference>
<dbReference type="InterPro" id="IPR039428">
    <property type="entry name" value="NUOK/Mnh_C1-like"/>
</dbReference>
<dbReference type="NCBIfam" id="NF004320">
    <property type="entry name" value="PRK05715.1-2"/>
    <property type="match status" value="1"/>
</dbReference>
<dbReference type="PANTHER" id="PTHR11434:SF16">
    <property type="entry name" value="NADH-UBIQUINONE OXIDOREDUCTASE CHAIN 4L"/>
    <property type="match status" value="1"/>
</dbReference>
<dbReference type="PANTHER" id="PTHR11434">
    <property type="entry name" value="NADH-UBIQUINONE OXIDOREDUCTASE SUBUNIT ND4L"/>
    <property type="match status" value="1"/>
</dbReference>
<dbReference type="Pfam" id="PF00420">
    <property type="entry name" value="Oxidored_q2"/>
    <property type="match status" value="1"/>
</dbReference>
<keyword id="KW-0150">Chloroplast</keyword>
<keyword id="KW-0472">Membrane</keyword>
<keyword id="KW-0520">NAD</keyword>
<keyword id="KW-0521">NADP</keyword>
<keyword id="KW-0934">Plastid</keyword>
<keyword id="KW-0618">Plastoquinone</keyword>
<keyword id="KW-0874">Quinone</keyword>
<keyword id="KW-1185">Reference proteome</keyword>
<keyword id="KW-0793">Thylakoid</keyword>
<keyword id="KW-1278">Translocase</keyword>
<keyword id="KW-0812">Transmembrane</keyword>
<keyword id="KW-1133">Transmembrane helix</keyword>
<keyword id="KW-0813">Transport</keyword>
<organism>
    <name type="scientific">Zea mays</name>
    <name type="common">Maize</name>
    <dbReference type="NCBI Taxonomy" id="4577"/>
    <lineage>
        <taxon>Eukaryota</taxon>
        <taxon>Viridiplantae</taxon>
        <taxon>Streptophyta</taxon>
        <taxon>Embryophyta</taxon>
        <taxon>Tracheophyta</taxon>
        <taxon>Spermatophyta</taxon>
        <taxon>Magnoliopsida</taxon>
        <taxon>Liliopsida</taxon>
        <taxon>Poales</taxon>
        <taxon>Poaceae</taxon>
        <taxon>PACMAD clade</taxon>
        <taxon>Panicoideae</taxon>
        <taxon>Andropogonodae</taxon>
        <taxon>Andropogoneae</taxon>
        <taxon>Tripsacinae</taxon>
        <taxon>Zea</taxon>
    </lineage>
</organism>
<sequence length="101" mass="11356">MMFERVLFLSVYLFSIGIYGLITSRNMVRALICLELILNSINLNLVTFSDLFDSRQLKGDIFAIFVIALAAAEAAIGLSILSSIHRNRKSTRINQSNFLNN</sequence>
<comment type="function">
    <text evidence="1">NDH shuttles electrons from NAD(P)H:plastoquinone, via FMN and iron-sulfur (Fe-S) centers, to quinones in the photosynthetic chain and possibly in a chloroplast respiratory chain. The immediate electron acceptor for the enzyme in this species is believed to be plastoquinone. Couples the redox reaction to proton translocation, and thus conserves the redox energy in a proton gradient.</text>
</comment>
<comment type="catalytic activity">
    <reaction evidence="1">
        <text>a plastoquinone + NADH + (n+1) H(+)(in) = a plastoquinol + NAD(+) + n H(+)(out)</text>
        <dbReference type="Rhea" id="RHEA:42608"/>
        <dbReference type="Rhea" id="RHEA-COMP:9561"/>
        <dbReference type="Rhea" id="RHEA-COMP:9562"/>
        <dbReference type="ChEBI" id="CHEBI:15378"/>
        <dbReference type="ChEBI" id="CHEBI:17757"/>
        <dbReference type="ChEBI" id="CHEBI:57540"/>
        <dbReference type="ChEBI" id="CHEBI:57945"/>
        <dbReference type="ChEBI" id="CHEBI:62192"/>
    </reaction>
</comment>
<comment type="catalytic activity">
    <reaction evidence="1">
        <text>a plastoquinone + NADPH + (n+1) H(+)(in) = a plastoquinol + NADP(+) + n H(+)(out)</text>
        <dbReference type="Rhea" id="RHEA:42612"/>
        <dbReference type="Rhea" id="RHEA-COMP:9561"/>
        <dbReference type="Rhea" id="RHEA-COMP:9562"/>
        <dbReference type="ChEBI" id="CHEBI:15378"/>
        <dbReference type="ChEBI" id="CHEBI:17757"/>
        <dbReference type="ChEBI" id="CHEBI:57783"/>
        <dbReference type="ChEBI" id="CHEBI:58349"/>
        <dbReference type="ChEBI" id="CHEBI:62192"/>
    </reaction>
</comment>
<comment type="subunit">
    <text evidence="1">NDH is composed of at least 16 different subunits, 5 of which are encoded in the nucleus.</text>
</comment>
<comment type="subcellular location">
    <subcellularLocation>
        <location evidence="1">Plastid</location>
        <location evidence="1">Chloroplast thylakoid membrane</location>
        <topology evidence="1">Multi-pass membrane protein</topology>
    </subcellularLocation>
</comment>
<comment type="similarity">
    <text evidence="1">Belongs to the complex I subunit 4L family.</text>
</comment>
<geneLocation type="chloroplast"/>
<gene>
    <name evidence="1" type="primary">ndhE</name>
    <name type="synonym">ndh4L</name>
</gene>
<reference key="1">
    <citation type="journal article" date="1988" name="Plant Mol. Biol.">
        <title>Maize chloroplast genes ndhD, ndhE, and psaC. Sequences, transcripts and transcript pools.</title>
        <authorList>
            <person name="Schantz R."/>
            <person name="Bogorad L."/>
        </authorList>
        <dbReference type="AGRICOLA" id="IND92000048"/>
    </citation>
    <scope>NUCLEOTIDE SEQUENCE [LARGE SCALE GENOMIC DNA]</scope>
    <source>
        <strain>cv. B73</strain>
    </source>
</reference>
<reference key="2">
    <citation type="journal article" date="1995" name="J. Mol. Biol.">
        <title>Complete sequence of the maize chloroplast genome: gene content, hotspots of divergence and fine tuning of genetic information by transcript editing.</title>
        <authorList>
            <person name="Maier R.M."/>
            <person name="Neckermann K."/>
            <person name="Igloi G.L."/>
            <person name="Koessel H."/>
        </authorList>
    </citation>
    <scope>NUCLEOTIDE SEQUENCE [LARGE SCALE GENOMIC DNA]</scope>
    <source>
        <strain>cv. B73</strain>
    </source>
</reference>